<name>CASP4_RAPSA</name>
<reference key="1">
    <citation type="submission" date="2008-01" db="EMBL/GenBank/DDBJ databases">
        <title>Comparative cDNA sequencing in radish (Raphanus), a crop, weed, and model system in ecology and evolution.</title>
        <authorList>
            <person name="Conner J.K."/>
            <person name="Shiu S.H."/>
            <person name="Xiao Y."/>
        </authorList>
    </citation>
    <scope>NUCLEOTIDE SEQUENCE [LARGE SCALE MRNA]</scope>
    <source>
        <strain>cv. Arena</strain>
        <tissue>Seedling</tissue>
    </source>
</reference>
<reference key="2">
    <citation type="journal article" date="2014" name="Plant Physiol.">
        <title>Functional and evolutionary analysis of the CASPARIAN STRIP MEMBRANE DOMAIN PROTEIN family.</title>
        <authorList>
            <person name="Roppolo D."/>
            <person name="Boeckmann B."/>
            <person name="Pfister A."/>
            <person name="Boutet E."/>
            <person name="Rubio M.C."/>
            <person name="Denervaud-Tendon V."/>
            <person name="Vermeer J.E."/>
            <person name="Gheyselinck J."/>
            <person name="Xenarios I."/>
            <person name="Geldner N."/>
        </authorList>
    </citation>
    <scope>GENE FAMILY</scope>
    <scope>NOMENCLATURE</scope>
</reference>
<evidence type="ECO:0000250" key="1"/>
<evidence type="ECO:0000255" key="2"/>
<evidence type="ECO:0000305" key="3"/>
<feature type="chain" id="PRO_0000417805" description="Casparian strip membrane protein 4">
    <location>
        <begin position="1"/>
        <end position="205"/>
    </location>
</feature>
<feature type="topological domain" description="Cytoplasmic" evidence="2">
    <location>
        <begin position="1"/>
        <end position="58"/>
    </location>
</feature>
<feature type="transmembrane region" description="Helical" evidence="2">
    <location>
        <begin position="59"/>
        <end position="79"/>
    </location>
</feature>
<feature type="topological domain" description="Extracellular" evidence="2">
    <location>
        <begin position="80"/>
        <end position="109"/>
    </location>
</feature>
<feature type="transmembrane region" description="Helical" evidence="2">
    <location>
        <begin position="110"/>
        <end position="130"/>
    </location>
</feature>
<feature type="topological domain" description="Cytoplasmic" evidence="2">
    <location>
        <begin position="131"/>
        <end position="148"/>
    </location>
</feature>
<feature type="transmembrane region" description="Helical" evidence="2">
    <location>
        <begin position="149"/>
        <end position="169"/>
    </location>
</feature>
<feature type="topological domain" description="Extracellular" evidence="2">
    <location>
        <begin position="170"/>
        <end position="205"/>
    </location>
</feature>
<feature type="glycosylation site" description="N-linked (GlcNAc...) asparagine" evidence="2">
    <location>
        <position position="173"/>
    </location>
</feature>
<keyword id="KW-1003">Cell membrane</keyword>
<keyword id="KW-0961">Cell wall biogenesis/degradation</keyword>
<keyword id="KW-0325">Glycoprotein</keyword>
<keyword id="KW-0472">Membrane</keyword>
<keyword id="KW-1185">Reference proteome</keyword>
<keyword id="KW-0812">Transmembrane</keyword>
<keyword id="KW-1133">Transmembrane helix</keyword>
<accession>P0DI48</accession>
<sequence length="205" mass="22819">MDIEKTGSRREEEEPIVQKPKLEKGKGKAHVFAPPMNYSRIMEKHKQEKVSMAGWKRGVAIFDFVLRLIAAITAMAAAAKMATTEETLPFFTQFLQFSADYTDLPTLSSFVIVNSIVGGYLTLSLPFSIVCILRPLAVPPRLFLILCDTAMMGLTMVAASASAAIVYLAHNGNSSSNWLPVCQQFGDFCKERVAPWWLPLLQRLF</sequence>
<organism>
    <name type="scientific">Raphanus sativus</name>
    <name type="common">Radish</name>
    <name type="synonym">Raphanus raphanistrum var. sativus</name>
    <dbReference type="NCBI Taxonomy" id="3726"/>
    <lineage>
        <taxon>Eukaryota</taxon>
        <taxon>Viridiplantae</taxon>
        <taxon>Streptophyta</taxon>
        <taxon>Embryophyta</taxon>
        <taxon>Tracheophyta</taxon>
        <taxon>Spermatophyta</taxon>
        <taxon>Magnoliopsida</taxon>
        <taxon>eudicotyledons</taxon>
        <taxon>Gunneridae</taxon>
        <taxon>Pentapetalae</taxon>
        <taxon>rosids</taxon>
        <taxon>malvids</taxon>
        <taxon>Brassicales</taxon>
        <taxon>Brassicaceae</taxon>
        <taxon>Brassiceae</taxon>
        <taxon>Raphanus</taxon>
    </lineage>
</organism>
<comment type="function">
    <text evidence="1">Regulates membrane-cell wall junctions and localized cell wall deposition. Required for establishment of the Casparian strip membrane domain (CSD) and the subsequent formation of Casparian strips, a cell wall modification of the root endodermis that determines an apoplastic barrier between the intraorganismal apoplasm and the extraorganismal apoplasm and prevents lateral diffusion (By similarity).</text>
</comment>
<comment type="subunit">
    <text evidence="1">Homodimer and heterodimers.</text>
</comment>
<comment type="subcellular location">
    <subcellularLocation>
        <location evidence="1">Cell membrane</location>
        <topology evidence="1">Multi-pass membrane protein</topology>
    </subcellularLocation>
    <text evidence="1">Very restricted localization following a belt shape within the plasma membrane which coincides with the position of the Casparian strip membrane domain in the root endodermis.</text>
</comment>
<comment type="similarity">
    <text evidence="3">Belongs to the Casparian strip membrane proteins (CASP) family.</text>
</comment>
<dbReference type="EMBL" id="FD561484">
    <property type="status" value="NOT_ANNOTATED_CDS"/>
    <property type="molecule type" value="mRNA"/>
</dbReference>
<dbReference type="Proteomes" id="UP000504610">
    <property type="component" value="Unplaced"/>
</dbReference>
<dbReference type="GO" id="GO:0005886">
    <property type="term" value="C:plasma membrane"/>
    <property type="evidence" value="ECO:0007669"/>
    <property type="project" value="UniProtKB-SubCell"/>
</dbReference>
<dbReference type="GO" id="GO:0071555">
    <property type="term" value="P:cell wall organization"/>
    <property type="evidence" value="ECO:0007669"/>
    <property type="project" value="UniProtKB-KW"/>
</dbReference>
<dbReference type="InterPro" id="IPR006459">
    <property type="entry name" value="CASP/CASPL"/>
</dbReference>
<dbReference type="InterPro" id="IPR006702">
    <property type="entry name" value="CASP_dom"/>
</dbReference>
<dbReference type="InterPro" id="IPR044173">
    <property type="entry name" value="CASPL"/>
</dbReference>
<dbReference type="NCBIfam" id="TIGR01569">
    <property type="entry name" value="A_tha_TIGR01569"/>
    <property type="match status" value="1"/>
</dbReference>
<dbReference type="PANTHER" id="PTHR36488:SF11">
    <property type="entry name" value="CASP-LIKE PROTEIN"/>
    <property type="match status" value="1"/>
</dbReference>
<dbReference type="PANTHER" id="PTHR36488">
    <property type="entry name" value="CASP-LIKE PROTEIN 1U1"/>
    <property type="match status" value="1"/>
</dbReference>
<dbReference type="Pfam" id="PF04535">
    <property type="entry name" value="CASP_dom"/>
    <property type="match status" value="1"/>
</dbReference>
<protein>
    <recommendedName>
        <fullName>Casparian strip membrane protein 4</fullName>
        <shortName>RsCASP4</shortName>
    </recommendedName>
</protein>
<proteinExistence type="evidence at transcript level"/>